<evidence type="ECO:0000255" key="1">
    <source>
        <dbReference type="HAMAP-Rule" id="MF_00232"/>
    </source>
</evidence>
<comment type="function">
    <text evidence="1">eIF-2 functions in the early steps of protein synthesis by forming a ternary complex with GTP and initiator tRNA.</text>
</comment>
<comment type="subunit">
    <text evidence="1">Heterotrimer composed of an alpha, a beta and a gamma chain.</text>
</comment>
<comment type="similarity">
    <text evidence="1">Belongs to the eIF-2-beta/eIF-5 family.</text>
</comment>
<gene>
    <name evidence="1" type="primary">eif2b</name>
    <name type="ordered locus">Smar_1102</name>
</gene>
<reference key="1">
    <citation type="journal article" date="2009" name="BMC Genomics">
        <title>The complete genome sequence of Staphylothermus marinus reveals differences in sulfur metabolism among heterotrophic Crenarchaeota.</title>
        <authorList>
            <person name="Anderson I.J."/>
            <person name="Dharmarajan L."/>
            <person name="Rodriguez J."/>
            <person name="Hooper S."/>
            <person name="Porat I."/>
            <person name="Ulrich L.E."/>
            <person name="Elkins J.G."/>
            <person name="Mavromatis K."/>
            <person name="Sun H."/>
            <person name="Land M."/>
            <person name="Lapidus A."/>
            <person name="Lucas S."/>
            <person name="Barry K."/>
            <person name="Huber H."/>
            <person name="Zhulin I.B."/>
            <person name="Whitman W.B."/>
            <person name="Mukhopadhyay B."/>
            <person name="Woese C."/>
            <person name="Bristow J."/>
            <person name="Kyrpides N."/>
        </authorList>
    </citation>
    <scope>NUCLEOTIDE SEQUENCE [LARGE SCALE GENOMIC DNA]</scope>
    <source>
        <strain>ATCC 43588 / DSM 3639 / JCM 9404 / F1</strain>
    </source>
</reference>
<reference key="2">
    <citation type="journal article" date="2009" name="Stand. Genomic Sci.">
        <title>Complete genome sequence of Staphylothermus marinus Stetter and Fiala 1986 type strain F1.</title>
        <authorList>
            <person name="Anderson I.J."/>
            <person name="Sun H."/>
            <person name="Lapidus A."/>
            <person name="Copeland A."/>
            <person name="Glavina Del Rio T."/>
            <person name="Tice H."/>
            <person name="Dalin E."/>
            <person name="Lucas S."/>
            <person name="Barry K."/>
            <person name="Land M."/>
            <person name="Richardson P."/>
            <person name="Huber H."/>
            <person name="Kyrpides N.C."/>
        </authorList>
    </citation>
    <scope>NUCLEOTIDE SEQUENCE [LARGE SCALE GENOMIC DNA]</scope>
    <source>
        <strain>ATCC 43588 / DSM 3639 / JCM 9404 / F1</strain>
    </source>
</reference>
<protein>
    <recommendedName>
        <fullName evidence="1">Translation initiation factor 2 subunit beta</fullName>
    </recommendedName>
    <alternativeName>
        <fullName evidence="1">aIF2-beta</fullName>
    </alternativeName>
    <alternativeName>
        <fullName evidence="1">eIF-2-beta</fullName>
    </alternativeName>
</protein>
<dbReference type="EMBL" id="CP000575">
    <property type="protein sequence ID" value="ABN70198.1"/>
    <property type="molecule type" value="Genomic_DNA"/>
</dbReference>
<dbReference type="RefSeq" id="WP_011839389.1">
    <property type="nucleotide sequence ID" value="NC_009033.1"/>
</dbReference>
<dbReference type="SMR" id="A3DNI8"/>
<dbReference type="STRING" id="399550.Smar_1102"/>
<dbReference type="GeneID" id="4906870"/>
<dbReference type="KEGG" id="smr:Smar_1102"/>
<dbReference type="eggNOG" id="arCOG01640">
    <property type="taxonomic scope" value="Archaea"/>
</dbReference>
<dbReference type="HOGENOM" id="CLU_026663_3_1_2"/>
<dbReference type="OrthoDB" id="38099at2157"/>
<dbReference type="Proteomes" id="UP000000254">
    <property type="component" value="Chromosome"/>
</dbReference>
<dbReference type="GO" id="GO:0003743">
    <property type="term" value="F:translation initiation factor activity"/>
    <property type="evidence" value="ECO:0007669"/>
    <property type="project" value="UniProtKB-UniRule"/>
</dbReference>
<dbReference type="Gene3D" id="3.30.30.170">
    <property type="match status" value="1"/>
</dbReference>
<dbReference type="HAMAP" id="MF_00232">
    <property type="entry name" value="eIF_2_beta"/>
    <property type="match status" value="1"/>
</dbReference>
<dbReference type="InterPro" id="IPR045196">
    <property type="entry name" value="IF2/IF5"/>
</dbReference>
<dbReference type="InterPro" id="IPR004458">
    <property type="entry name" value="TIF2_bsu_arc"/>
</dbReference>
<dbReference type="InterPro" id="IPR002735">
    <property type="entry name" value="Transl_init_fac_IF2/IF5_dom"/>
</dbReference>
<dbReference type="InterPro" id="IPR016189">
    <property type="entry name" value="Transl_init_fac_IF2/IF5_N"/>
</dbReference>
<dbReference type="InterPro" id="IPR016190">
    <property type="entry name" value="Transl_init_fac_IF2/IF5_Zn-bd"/>
</dbReference>
<dbReference type="NCBIfam" id="TIGR00311">
    <property type="entry name" value="aIF-2beta"/>
    <property type="match status" value="1"/>
</dbReference>
<dbReference type="NCBIfam" id="NF003067">
    <property type="entry name" value="PRK03988.1"/>
    <property type="match status" value="1"/>
</dbReference>
<dbReference type="PANTHER" id="PTHR23001">
    <property type="entry name" value="EUKARYOTIC TRANSLATION INITIATION FACTOR"/>
    <property type="match status" value="1"/>
</dbReference>
<dbReference type="PANTHER" id="PTHR23001:SF3">
    <property type="entry name" value="EUKARYOTIC TRANSLATION INITIATION FACTOR 2 SUBUNIT 2"/>
    <property type="match status" value="1"/>
</dbReference>
<dbReference type="Pfam" id="PF01873">
    <property type="entry name" value="eIF-5_eIF-2B"/>
    <property type="match status" value="1"/>
</dbReference>
<dbReference type="SMART" id="SM00653">
    <property type="entry name" value="eIF2B_5"/>
    <property type="match status" value="1"/>
</dbReference>
<dbReference type="SUPFAM" id="SSF100966">
    <property type="entry name" value="Translation initiation factor 2 beta, aIF2beta, N-terminal domain"/>
    <property type="match status" value="1"/>
</dbReference>
<dbReference type="SUPFAM" id="SSF75689">
    <property type="entry name" value="Zinc-binding domain of translation initiation factor 2 beta"/>
    <property type="match status" value="1"/>
</dbReference>
<feature type="chain" id="PRO_0000336759" description="Translation initiation factor 2 subunit beta">
    <location>
        <begin position="1"/>
        <end position="142"/>
    </location>
</feature>
<sequence length="142" mass="16402">MTRRIRDYKFEELLERAYSKLPARTVSKETFEVPRAEVMFVGGKTLILNFKQITDVINRDPKILQRYFVKELGVPAYMNESGQLILQGRFSSHVINRLIDLFVKKYVICPTCGSRFTKLIKKGKVFILKCEACGAETTLEAF</sequence>
<proteinExistence type="inferred from homology"/>
<keyword id="KW-0396">Initiation factor</keyword>
<keyword id="KW-0648">Protein biosynthesis</keyword>
<keyword id="KW-1185">Reference proteome</keyword>
<accession>A3DNI8</accession>
<organism>
    <name type="scientific">Staphylothermus marinus (strain ATCC 43588 / DSM 3639 / JCM 9404 / F1)</name>
    <dbReference type="NCBI Taxonomy" id="399550"/>
    <lineage>
        <taxon>Archaea</taxon>
        <taxon>Thermoproteota</taxon>
        <taxon>Thermoprotei</taxon>
        <taxon>Desulfurococcales</taxon>
        <taxon>Desulfurococcaceae</taxon>
        <taxon>Staphylothermus</taxon>
    </lineage>
</organism>
<name>IF2B_STAMF</name>